<dbReference type="EC" id="1.4.99.-" evidence="1"/>
<dbReference type="EMBL" id="AE017220">
    <property type="protein sequence ID" value="AAX65702.1"/>
    <property type="molecule type" value="Genomic_DNA"/>
</dbReference>
<dbReference type="RefSeq" id="WP_011264307.1">
    <property type="nucleotide sequence ID" value="NC_006905.1"/>
</dbReference>
<dbReference type="SMR" id="Q57NK9"/>
<dbReference type="KEGG" id="sec:SCH_1796"/>
<dbReference type="HOGENOM" id="CLU_007884_9_2_6"/>
<dbReference type="UniPathway" id="UPA00043">
    <property type="reaction ID" value="UER00498"/>
</dbReference>
<dbReference type="Proteomes" id="UP000000538">
    <property type="component" value="Chromosome"/>
</dbReference>
<dbReference type="GO" id="GO:0005737">
    <property type="term" value="C:cytoplasm"/>
    <property type="evidence" value="ECO:0007669"/>
    <property type="project" value="TreeGrafter"/>
</dbReference>
<dbReference type="GO" id="GO:0005886">
    <property type="term" value="C:plasma membrane"/>
    <property type="evidence" value="ECO:0007669"/>
    <property type="project" value="TreeGrafter"/>
</dbReference>
<dbReference type="GO" id="GO:0008718">
    <property type="term" value="F:D-amino-acid dehydrogenase activity"/>
    <property type="evidence" value="ECO:0007669"/>
    <property type="project" value="UniProtKB-UniRule"/>
</dbReference>
<dbReference type="GO" id="GO:0055130">
    <property type="term" value="P:D-alanine catabolic process"/>
    <property type="evidence" value="ECO:0007669"/>
    <property type="project" value="UniProtKB-UniPathway"/>
</dbReference>
<dbReference type="FunFam" id="3.50.50.60:FF:000020">
    <property type="entry name" value="D-amino acid dehydrogenase"/>
    <property type="match status" value="1"/>
</dbReference>
<dbReference type="Gene3D" id="3.30.9.10">
    <property type="entry name" value="D-Amino Acid Oxidase, subunit A, domain 2"/>
    <property type="match status" value="1"/>
</dbReference>
<dbReference type="Gene3D" id="3.50.50.60">
    <property type="entry name" value="FAD/NAD(P)-binding domain"/>
    <property type="match status" value="2"/>
</dbReference>
<dbReference type="HAMAP" id="MF_01202">
    <property type="entry name" value="DadA"/>
    <property type="match status" value="1"/>
</dbReference>
<dbReference type="InterPro" id="IPR023080">
    <property type="entry name" value="DadA"/>
</dbReference>
<dbReference type="InterPro" id="IPR006076">
    <property type="entry name" value="FAD-dep_OxRdtase"/>
</dbReference>
<dbReference type="InterPro" id="IPR036188">
    <property type="entry name" value="FAD/NAD-bd_sf"/>
</dbReference>
<dbReference type="NCBIfam" id="NF001933">
    <property type="entry name" value="PRK00711.1"/>
    <property type="match status" value="1"/>
</dbReference>
<dbReference type="PANTHER" id="PTHR13847:SF280">
    <property type="entry name" value="D-AMINO ACID DEHYDROGENASE"/>
    <property type="match status" value="1"/>
</dbReference>
<dbReference type="PANTHER" id="PTHR13847">
    <property type="entry name" value="SARCOSINE DEHYDROGENASE-RELATED"/>
    <property type="match status" value="1"/>
</dbReference>
<dbReference type="Pfam" id="PF01266">
    <property type="entry name" value="DAO"/>
    <property type="match status" value="1"/>
</dbReference>
<dbReference type="SUPFAM" id="SSF54373">
    <property type="entry name" value="FAD-linked reductases, C-terminal domain"/>
    <property type="match status" value="1"/>
</dbReference>
<dbReference type="SUPFAM" id="SSF51905">
    <property type="entry name" value="FAD/NAD(P)-binding domain"/>
    <property type="match status" value="1"/>
</dbReference>
<gene>
    <name evidence="1" type="primary">dadA</name>
    <name type="ordered locus">SCH_1796</name>
</gene>
<keyword id="KW-0274">FAD</keyword>
<keyword id="KW-0285">Flavoprotein</keyword>
<keyword id="KW-0560">Oxidoreductase</keyword>
<organism>
    <name type="scientific">Salmonella choleraesuis (strain SC-B67)</name>
    <dbReference type="NCBI Taxonomy" id="321314"/>
    <lineage>
        <taxon>Bacteria</taxon>
        <taxon>Pseudomonadati</taxon>
        <taxon>Pseudomonadota</taxon>
        <taxon>Gammaproteobacteria</taxon>
        <taxon>Enterobacterales</taxon>
        <taxon>Enterobacteriaceae</taxon>
        <taxon>Salmonella</taxon>
    </lineage>
</organism>
<protein>
    <recommendedName>
        <fullName evidence="1">D-amino acid dehydrogenase</fullName>
        <ecNumber evidence="1">1.4.99.-</ecNumber>
    </recommendedName>
</protein>
<comment type="function">
    <text evidence="1">Oxidative deamination of D-amino acids.</text>
</comment>
<comment type="catalytic activity">
    <reaction evidence="1">
        <text>a D-alpha-amino acid + A + H2O = a 2-oxocarboxylate + AH2 + NH4(+)</text>
        <dbReference type="Rhea" id="RHEA:18125"/>
        <dbReference type="ChEBI" id="CHEBI:13193"/>
        <dbReference type="ChEBI" id="CHEBI:15377"/>
        <dbReference type="ChEBI" id="CHEBI:17499"/>
        <dbReference type="ChEBI" id="CHEBI:28938"/>
        <dbReference type="ChEBI" id="CHEBI:35179"/>
        <dbReference type="ChEBI" id="CHEBI:59871"/>
    </reaction>
</comment>
<comment type="cofactor">
    <cofactor evidence="1">
        <name>FAD</name>
        <dbReference type="ChEBI" id="CHEBI:57692"/>
    </cofactor>
</comment>
<comment type="pathway">
    <text>Amino-acid degradation; D-alanine degradation; NH(3) and pyruvate from D-alanine: step 1/1.</text>
</comment>
<comment type="similarity">
    <text evidence="1">Belongs to the DadA oxidoreductase family.</text>
</comment>
<feature type="chain" id="PRO_1000066113" description="D-amino acid dehydrogenase">
    <location>
        <begin position="1"/>
        <end position="432"/>
    </location>
</feature>
<feature type="binding site" evidence="1">
    <location>
        <begin position="3"/>
        <end position="17"/>
    </location>
    <ligand>
        <name>FAD</name>
        <dbReference type="ChEBI" id="CHEBI:57692"/>
    </ligand>
</feature>
<evidence type="ECO:0000255" key="1">
    <source>
        <dbReference type="HAMAP-Rule" id="MF_01202"/>
    </source>
</evidence>
<reference key="1">
    <citation type="journal article" date="2005" name="Nucleic Acids Res.">
        <title>The genome sequence of Salmonella enterica serovar Choleraesuis, a highly invasive and resistant zoonotic pathogen.</title>
        <authorList>
            <person name="Chiu C.-H."/>
            <person name="Tang P."/>
            <person name="Chu C."/>
            <person name="Hu S."/>
            <person name="Bao Q."/>
            <person name="Yu J."/>
            <person name="Chou Y.-Y."/>
            <person name="Wang H.-S."/>
            <person name="Lee Y.-S."/>
        </authorList>
    </citation>
    <scope>NUCLEOTIDE SEQUENCE [LARGE SCALE GENOMIC DNA]</scope>
    <source>
        <strain>SC-B67</strain>
    </source>
</reference>
<proteinExistence type="inferred from homology"/>
<accession>Q57NK9</accession>
<name>DADA_SALCH</name>
<sequence length="432" mass="47901">MRVVILGSGVVGVTSAWYLSQAGHDVTVIDRESGPAQETSAANAGQISPGYAAPWAAPGVPLKAIKWMFQRHAPLAVRLDGTPFQLKWMWQMLRNCDTRHYMENKGRMVRLAEYSRDCLKTLRAVTGIEYEGCQGGTLQLFRTAQQYENATRDIAVLEDAGVPYQLLEASRLAEVEPALAEVAHKLTGGLRLPNDETGDCQLFTQRLARMAEQAGVTFRFNTPVEKLLYENDQIYGVKCADEIIKADAYVMAFGSYSTAMLKGIVDIPVYPLKGYSLTIPIVEPDGAPVSTILDETYKIAITRFDKRIRVGGMAEIVGFNTDLLQPRRETLEMVVRDLFPRGGHIEQATFWTGLRPMTPDGTPVVGRTRYKNLWLNTGHGTLGWTMACGSGQLLSDILSGRTPAIPYDDLSVARYRSDFTPTRPQRLHSAHN</sequence>